<dbReference type="EMBL" id="AE017143">
    <property type="protein sequence ID" value="AAP95940.1"/>
    <property type="molecule type" value="Genomic_DNA"/>
</dbReference>
<dbReference type="RefSeq" id="WP_010944989.1">
    <property type="nucleotide sequence ID" value="NC_002940.2"/>
</dbReference>
<dbReference type="SMR" id="Q7VMB7"/>
<dbReference type="STRING" id="233412.HD_1073"/>
<dbReference type="GeneID" id="60732899"/>
<dbReference type="KEGG" id="hdu:HD_1073"/>
<dbReference type="eggNOG" id="COG0576">
    <property type="taxonomic scope" value="Bacteria"/>
</dbReference>
<dbReference type="HOGENOM" id="CLU_057217_6_0_6"/>
<dbReference type="OrthoDB" id="9789811at2"/>
<dbReference type="Proteomes" id="UP000001022">
    <property type="component" value="Chromosome"/>
</dbReference>
<dbReference type="GO" id="GO:0005829">
    <property type="term" value="C:cytosol"/>
    <property type="evidence" value="ECO:0007669"/>
    <property type="project" value="TreeGrafter"/>
</dbReference>
<dbReference type="GO" id="GO:0000774">
    <property type="term" value="F:adenyl-nucleotide exchange factor activity"/>
    <property type="evidence" value="ECO:0007669"/>
    <property type="project" value="InterPro"/>
</dbReference>
<dbReference type="GO" id="GO:0042803">
    <property type="term" value="F:protein homodimerization activity"/>
    <property type="evidence" value="ECO:0007669"/>
    <property type="project" value="InterPro"/>
</dbReference>
<dbReference type="GO" id="GO:0051087">
    <property type="term" value="F:protein-folding chaperone binding"/>
    <property type="evidence" value="ECO:0007669"/>
    <property type="project" value="InterPro"/>
</dbReference>
<dbReference type="GO" id="GO:0051082">
    <property type="term" value="F:unfolded protein binding"/>
    <property type="evidence" value="ECO:0007669"/>
    <property type="project" value="TreeGrafter"/>
</dbReference>
<dbReference type="GO" id="GO:0006457">
    <property type="term" value="P:protein folding"/>
    <property type="evidence" value="ECO:0007669"/>
    <property type="project" value="InterPro"/>
</dbReference>
<dbReference type="CDD" id="cd00446">
    <property type="entry name" value="GrpE"/>
    <property type="match status" value="1"/>
</dbReference>
<dbReference type="FunFam" id="2.30.22.10:FF:000001">
    <property type="entry name" value="Protein GrpE"/>
    <property type="match status" value="1"/>
</dbReference>
<dbReference type="Gene3D" id="3.90.20.20">
    <property type="match status" value="1"/>
</dbReference>
<dbReference type="Gene3D" id="2.30.22.10">
    <property type="entry name" value="Head domain of nucleotide exchange factor GrpE"/>
    <property type="match status" value="1"/>
</dbReference>
<dbReference type="HAMAP" id="MF_01151">
    <property type="entry name" value="GrpE"/>
    <property type="match status" value="1"/>
</dbReference>
<dbReference type="InterPro" id="IPR000740">
    <property type="entry name" value="GrpE"/>
</dbReference>
<dbReference type="InterPro" id="IPR013805">
    <property type="entry name" value="GrpE_coiled_coil"/>
</dbReference>
<dbReference type="InterPro" id="IPR009012">
    <property type="entry name" value="GrpE_head"/>
</dbReference>
<dbReference type="NCBIfam" id="NF010738">
    <property type="entry name" value="PRK14140.1"/>
    <property type="match status" value="1"/>
</dbReference>
<dbReference type="NCBIfam" id="NF010748">
    <property type="entry name" value="PRK14150.1"/>
    <property type="match status" value="1"/>
</dbReference>
<dbReference type="PANTHER" id="PTHR21237">
    <property type="entry name" value="GRPE PROTEIN"/>
    <property type="match status" value="1"/>
</dbReference>
<dbReference type="PANTHER" id="PTHR21237:SF23">
    <property type="entry name" value="GRPE PROTEIN HOMOLOG, MITOCHONDRIAL"/>
    <property type="match status" value="1"/>
</dbReference>
<dbReference type="Pfam" id="PF01025">
    <property type="entry name" value="GrpE"/>
    <property type="match status" value="1"/>
</dbReference>
<dbReference type="PRINTS" id="PR00773">
    <property type="entry name" value="GRPEPROTEIN"/>
</dbReference>
<dbReference type="SUPFAM" id="SSF58014">
    <property type="entry name" value="Coiled-coil domain of nucleotide exchange factor GrpE"/>
    <property type="match status" value="1"/>
</dbReference>
<dbReference type="SUPFAM" id="SSF51064">
    <property type="entry name" value="Head domain of nucleotide exchange factor GrpE"/>
    <property type="match status" value="1"/>
</dbReference>
<dbReference type="PROSITE" id="PS01071">
    <property type="entry name" value="GRPE"/>
    <property type="match status" value="1"/>
</dbReference>
<evidence type="ECO:0000255" key="1">
    <source>
        <dbReference type="HAMAP-Rule" id="MF_01151"/>
    </source>
</evidence>
<evidence type="ECO:0000256" key="2">
    <source>
        <dbReference type="SAM" id="MobiDB-lite"/>
    </source>
</evidence>
<protein>
    <recommendedName>
        <fullName evidence="1">Protein GrpE</fullName>
    </recommendedName>
    <alternativeName>
        <fullName evidence="1">HSP-70 cofactor</fullName>
    </alternativeName>
</protein>
<keyword id="KW-0143">Chaperone</keyword>
<keyword id="KW-0963">Cytoplasm</keyword>
<keyword id="KW-1185">Reference proteome</keyword>
<keyword id="KW-0346">Stress response</keyword>
<comment type="function">
    <text evidence="1">Participates actively in the response to hyperosmotic and heat shock by preventing the aggregation of stress-denatured proteins, in association with DnaK and GrpE. It is the nucleotide exchange factor for DnaK and may function as a thermosensor. Unfolded proteins bind initially to DnaJ; upon interaction with the DnaJ-bound protein, DnaK hydrolyzes its bound ATP, resulting in the formation of a stable complex. GrpE releases ADP from DnaK; ATP binding to DnaK triggers the release of the substrate protein, thus completing the reaction cycle. Several rounds of ATP-dependent interactions between DnaJ, DnaK and GrpE are required for fully efficient folding.</text>
</comment>
<comment type="subunit">
    <text evidence="1">Homodimer.</text>
</comment>
<comment type="subcellular location">
    <subcellularLocation>
        <location evidence="1">Cytoplasm</location>
    </subcellularLocation>
</comment>
<comment type="similarity">
    <text evidence="1">Belongs to the GrpE family.</text>
</comment>
<name>GRPE_HAEDU</name>
<sequence>MTTEKETATPADVEVASQEEQIDQTTEAQVEEPSIEAELAGCYAKIHELETYIAEADKREQDIQLRAQAEIQNIRRRTEQDIEKAHKFALEKFAKELLTVVDNLERGLVALDTAVTDEKTQALVDGVEMTHKEFVSTLAKFGIEAIGEIGDVFNPELHQAISMQPAENIEANHLSQVLQKGYTLQGRVIRPAMVMVAA</sequence>
<feature type="chain" id="PRO_0000113792" description="Protein GrpE">
    <location>
        <begin position="1"/>
        <end position="198"/>
    </location>
</feature>
<feature type="region of interest" description="Disordered" evidence="2">
    <location>
        <begin position="1"/>
        <end position="32"/>
    </location>
</feature>
<gene>
    <name evidence="1" type="primary">grpE</name>
    <name type="ordered locus">HD_1073</name>
</gene>
<reference key="1">
    <citation type="submission" date="2003-06" db="EMBL/GenBank/DDBJ databases">
        <title>The complete genome sequence of Haemophilus ducreyi.</title>
        <authorList>
            <person name="Munson R.S. Jr."/>
            <person name="Ray W.C."/>
            <person name="Mahairas G."/>
            <person name="Sabo P."/>
            <person name="Mungur R."/>
            <person name="Johnson L."/>
            <person name="Nguyen D."/>
            <person name="Wang J."/>
            <person name="Forst C."/>
            <person name="Hood L."/>
        </authorList>
    </citation>
    <scope>NUCLEOTIDE SEQUENCE [LARGE SCALE GENOMIC DNA]</scope>
    <source>
        <strain>35000HP / ATCC 700724</strain>
    </source>
</reference>
<accession>Q7VMB7</accession>
<organism>
    <name type="scientific">Haemophilus ducreyi (strain 35000HP / ATCC 700724)</name>
    <dbReference type="NCBI Taxonomy" id="233412"/>
    <lineage>
        <taxon>Bacteria</taxon>
        <taxon>Pseudomonadati</taxon>
        <taxon>Pseudomonadota</taxon>
        <taxon>Gammaproteobacteria</taxon>
        <taxon>Pasteurellales</taxon>
        <taxon>Pasteurellaceae</taxon>
        <taxon>Haemophilus</taxon>
    </lineage>
</organism>
<proteinExistence type="inferred from homology"/>